<name>GRPE_LEPIN</name>
<sequence length="212" mass="24190">MAEMSNNKTSEEAKANGKKSQSETLEESKLENMNSEESTETTQTESMETAETETSLQTELESAKKEIESLKDSWARERAEFQNFKRRSAQEFVSIRKEAVKSLVSGFLNPIDNLERVGATQTNSEELKPFVDGVTMILKEFYSVLEKSNVIRFDPKGEPFDPMSMEALSSEEGDQYSEETVIDVYQPGYYYKENEDKFTLRPARVRIGKPKS</sequence>
<accession>P61445</accession>
<accession>O51868</accession>
<protein>
    <recommendedName>
        <fullName evidence="1">Protein GrpE</fullName>
    </recommendedName>
    <alternativeName>
        <fullName evidence="1">HSP-70 cofactor</fullName>
    </alternativeName>
</protein>
<comment type="function">
    <text evidence="1">Participates actively in the response to hyperosmotic and heat shock by preventing the aggregation of stress-denatured proteins, in association with DnaK and GrpE. It is the nucleotide exchange factor for DnaK and may function as a thermosensor. Unfolded proteins bind initially to DnaJ; upon interaction with the DnaJ-bound protein, DnaK hydrolyzes its bound ATP, resulting in the formation of a stable complex. GrpE releases ADP from DnaK; ATP binding to DnaK triggers the release of the substrate protein, thus completing the reaction cycle. Several rounds of ATP-dependent interactions between DnaJ, DnaK and GrpE are required for fully efficient folding.</text>
</comment>
<comment type="subunit">
    <text evidence="1">Homodimer.</text>
</comment>
<comment type="subcellular location">
    <subcellularLocation>
        <location evidence="1">Cytoplasm</location>
    </subcellularLocation>
</comment>
<comment type="similarity">
    <text evidence="1">Belongs to the GrpE family.</text>
</comment>
<dbReference type="EMBL" id="AE010300">
    <property type="protein sequence ID" value="AAN50902.1"/>
    <property type="molecule type" value="Genomic_DNA"/>
</dbReference>
<dbReference type="RefSeq" id="NP_713884.1">
    <property type="nucleotide sequence ID" value="NC_004342.2"/>
</dbReference>
<dbReference type="RefSeq" id="WP_000829531.1">
    <property type="nucleotide sequence ID" value="NC_004342.2"/>
</dbReference>
<dbReference type="SMR" id="P61445"/>
<dbReference type="FunCoup" id="P61445">
    <property type="interactions" value="432"/>
</dbReference>
<dbReference type="STRING" id="189518.LA_3704"/>
<dbReference type="PaxDb" id="189518-LA_3704"/>
<dbReference type="EnsemblBacteria" id="AAN50902">
    <property type="protein sequence ID" value="AAN50902"/>
    <property type="gene ID" value="LA_3704"/>
</dbReference>
<dbReference type="KEGG" id="lil:LA_3704"/>
<dbReference type="PATRIC" id="fig|189518.3.peg.3679"/>
<dbReference type="HOGENOM" id="CLU_057217_5_2_12"/>
<dbReference type="InParanoid" id="P61445"/>
<dbReference type="OrthoDB" id="9812586at2"/>
<dbReference type="Proteomes" id="UP000001408">
    <property type="component" value="Chromosome I"/>
</dbReference>
<dbReference type="GO" id="GO:0005737">
    <property type="term" value="C:cytoplasm"/>
    <property type="evidence" value="ECO:0007669"/>
    <property type="project" value="UniProtKB-SubCell"/>
</dbReference>
<dbReference type="GO" id="GO:0000774">
    <property type="term" value="F:adenyl-nucleotide exchange factor activity"/>
    <property type="evidence" value="ECO:0000318"/>
    <property type="project" value="GO_Central"/>
</dbReference>
<dbReference type="GO" id="GO:0042803">
    <property type="term" value="F:protein homodimerization activity"/>
    <property type="evidence" value="ECO:0007669"/>
    <property type="project" value="InterPro"/>
</dbReference>
<dbReference type="GO" id="GO:0051087">
    <property type="term" value="F:protein-folding chaperone binding"/>
    <property type="evidence" value="ECO:0007669"/>
    <property type="project" value="InterPro"/>
</dbReference>
<dbReference type="GO" id="GO:0051082">
    <property type="term" value="F:unfolded protein binding"/>
    <property type="evidence" value="ECO:0000318"/>
    <property type="project" value="GO_Central"/>
</dbReference>
<dbReference type="GO" id="GO:0006457">
    <property type="term" value="P:protein folding"/>
    <property type="evidence" value="ECO:0007669"/>
    <property type="project" value="InterPro"/>
</dbReference>
<dbReference type="CDD" id="cd00446">
    <property type="entry name" value="GrpE"/>
    <property type="match status" value="1"/>
</dbReference>
<dbReference type="FunFam" id="2.30.22.10:FF:000006">
    <property type="entry name" value="Protein GrpE"/>
    <property type="match status" value="1"/>
</dbReference>
<dbReference type="Gene3D" id="3.90.20.20">
    <property type="match status" value="1"/>
</dbReference>
<dbReference type="Gene3D" id="2.30.22.10">
    <property type="entry name" value="Head domain of nucleotide exchange factor GrpE"/>
    <property type="match status" value="1"/>
</dbReference>
<dbReference type="HAMAP" id="MF_01151">
    <property type="entry name" value="GrpE"/>
    <property type="match status" value="1"/>
</dbReference>
<dbReference type="InterPro" id="IPR000740">
    <property type="entry name" value="GrpE"/>
</dbReference>
<dbReference type="InterPro" id="IPR013805">
    <property type="entry name" value="GrpE_coiled_coil"/>
</dbReference>
<dbReference type="InterPro" id="IPR009012">
    <property type="entry name" value="GrpE_head"/>
</dbReference>
<dbReference type="NCBIfam" id="NF010744">
    <property type="entry name" value="PRK14146.1"/>
    <property type="match status" value="1"/>
</dbReference>
<dbReference type="PANTHER" id="PTHR21237">
    <property type="entry name" value="GRPE PROTEIN"/>
    <property type="match status" value="1"/>
</dbReference>
<dbReference type="PANTHER" id="PTHR21237:SF23">
    <property type="entry name" value="GRPE PROTEIN HOMOLOG, MITOCHONDRIAL"/>
    <property type="match status" value="1"/>
</dbReference>
<dbReference type="Pfam" id="PF01025">
    <property type="entry name" value="GrpE"/>
    <property type="match status" value="1"/>
</dbReference>
<dbReference type="PRINTS" id="PR00773">
    <property type="entry name" value="GRPEPROTEIN"/>
</dbReference>
<dbReference type="SUPFAM" id="SSF58014">
    <property type="entry name" value="Coiled-coil domain of nucleotide exchange factor GrpE"/>
    <property type="match status" value="1"/>
</dbReference>
<dbReference type="SUPFAM" id="SSF51064">
    <property type="entry name" value="Head domain of nucleotide exchange factor GrpE"/>
    <property type="match status" value="1"/>
</dbReference>
<dbReference type="PROSITE" id="PS01071">
    <property type="entry name" value="GRPE"/>
    <property type="match status" value="1"/>
</dbReference>
<proteinExistence type="inferred from homology"/>
<feature type="chain" id="PRO_0000113806" description="Protein GrpE">
    <location>
        <begin position="1"/>
        <end position="212"/>
    </location>
</feature>
<feature type="region of interest" description="Disordered" evidence="2">
    <location>
        <begin position="1"/>
        <end position="69"/>
    </location>
</feature>
<feature type="compositionally biased region" description="Low complexity" evidence="2">
    <location>
        <begin position="40"/>
        <end position="60"/>
    </location>
</feature>
<evidence type="ECO:0000255" key="1">
    <source>
        <dbReference type="HAMAP-Rule" id="MF_01151"/>
    </source>
</evidence>
<evidence type="ECO:0000256" key="2">
    <source>
        <dbReference type="SAM" id="MobiDB-lite"/>
    </source>
</evidence>
<keyword id="KW-0143">Chaperone</keyword>
<keyword id="KW-0963">Cytoplasm</keyword>
<keyword id="KW-1185">Reference proteome</keyword>
<keyword id="KW-0346">Stress response</keyword>
<gene>
    <name evidence="1" type="primary">grpE</name>
    <name type="ordered locus">LA_3704</name>
</gene>
<reference key="1">
    <citation type="journal article" date="2003" name="Nature">
        <title>Unique physiological and pathogenic features of Leptospira interrogans revealed by whole-genome sequencing.</title>
        <authorList>
            <person name="Ren S.-X."/>
            <person name="Fu G."/>
            <person name="Jiang X.-G."/>
            <person name="Zeng R."/>
            <person name="Miao Y.-G."/>
            <person name="Xu H."/>
            <person name="Zhang Y.-X."/>
            <person name="Xiong H."/>
            <person name="Lu G."/>
            <person name="Lu L.-F."/>
            <person name="Jiang H.-Q."/>
            <person name="Jia J."/>
            <person name="Tu Y.-F."/>
            <person name="Jiang J.-X."/>
            <person name="Gu W.-Y."/>
            <person name="Zhang Y.-Q."/>
            <person name="Cai Z."/>
            <person name="Sheng H.-H."/>
            <person name="Yin H.-F."/>
            <person name="Zhang Y."/>
            <person name="Zhu G.-F."/>
            <person name="Wan M."/>
            <person name="Huang H.-L."/>
            <person name="Qian Z."/>
            <person name="Wang S.-Y."/>
            <person name="Ma W."/>
            <person name="Yao Z.-J."/>
            <person name="Shen Y."/>
            <person name="Qiang B.-Q."/>
            <person name="Xia Q.-C."/>
            <person name="Guo X.-K."/>
            <person name="Danchin A."/>
            <person name="Saint Girons I."/>
            <person name="Somerville R.L."/>
            <person name="Wen Y.-M."/>
            <person name="Shi M.-H."/>
            <person name="Chen Z."/>
            <person name="Xu J.-G."/>
            <person name="Zhao G.-P."/>
        </authorList>
    </citation>
    <scope>NUCLEOTIDE SEQUENCE [LARGE SCALE GENOMIC DNA]</scope>
    <source>
        <strain>56601</strain>
    </source>
</reference>
<organism>
    <name type="scientific">Leptospira interrogans serogroup Icterohaemorrhagiae serovar Lai (strain 56601)</name>
    <dbReference type="NCBI Taxonomy" id="189518"/>
    <lineage>
        <taxon>Bacteria</taxon>
        <taxon>Pseudomonadati</taxon>
        <taxon>Spirochaetota</taxon>
        <taxon>Spirochaetia</taxon>
        <taxon>Leptospirales</taxon>
        <taxon>Leptospiraceae</taxon>
        <taxon>Leptospira</taxon>
    </lineage>
</organism>